<gene>
    <name evidence="1" type="primary">rnc</name>
    <name type="ordered locus">NGR_c08290</name>
</gene>
<feature type="chain" id="PRO_1000202843" description="Ribonuclease 3">
    <location>
        <begin position="1"/>
        <end position="239"/>
    </location>
</feature>
<feature type="domain" description="RNase III" evidence="1">
    <location>
        <begin position="12"/>
        <end position="137"/>
    </location>
</feature>
<feature type="domain" description="DRBM" evidence="1">
    <location>
        <begin position="162"/>
        <end position="231"/>
    </location>
</feature>
<feature type="active site" evidence="1">
    <location>
        <position position="54"/>
    </location>
</feature>
<feature type="active site" evidence="1">
    <location>
        <position position="126"/>
    </location>
</feature>
<feature type="binding site" evidence="1">
    <location>
        <position position="50"/>
    </location>
    <ligand>
        <name>Mg(2+)</name>
        <dbReference type="ChEBI" id="CHEBI:18420"/>
    </ligand>
</feature>
<feature type="binding site" evidence="1">
    <location>
        <position position="123"/>
    </location>
    <ligand>
        <name>Mg(2+)</name>
        <dbReference type="ChEBI" id="CHEBI:18420"/>
    </ligand>
</feature>
<feature type="binding site" evidence="1">
    <location>
        <position position="126"/>
    </location>
    <ligand>
        <name>Mg(2+)</name>
        <dbReference type="ChEBI" id="CHEBI:18420"/>
    </ligand>
</feature>
<proteinExistence type="inferred from homology"/>
<evidence type="ECO:0000255" key="1">
    <source>
        <dbReference type="HAMAP-Rule" id="MF_00104"/>
    </source>
</evidence>
<organism>
    <name type="scientific">Sinorhizobium fredii (strain NBRC 101917 / NGR234)</name>
    <dbReference type="NCBI Taxonomy" id="394"/>
    <lineage>
        <taxon>Bacteria</taxon>
        <taxon>Pseudomonadati</taxon>
        <taxon>Pseudomonadota</taxon>
        <taxon>Alphaproteobacteria</taxon>
        <taxon>Hyphomicrobiales</taxon>
        <taxon>Rhizobiaceae</taxon>
        <taxon>Sinorhizobium/Ensifer group</taxon>
        <taxon>Sinorhizobium</taxon>
    </lineage>
</organism>
<keyword id="KW-0963">Cytoplasm</keyword>
<keyword id="KW-0255">Endonuclease</keyword>
<keyword id="KW-0378">Hydrolase</keyword>
<keyword id="KW-0460">Magnesium</keyword>
<keyword id="KW-0479">Metal-binding</keyword>
<keyword id="KW-0507">mRNA processing</keyword>
<keyword id="KW-0540">Nuclease</keyword>
<keyword id="KW-1185">Reference proteome</keyword>
<keyword id="KW-0694">RNA-binding</keyword>
<keyword id="KW-0698">rRNA processing</keyword>
<keyword id="KW-0699">rRNA-binding</keyword>
<keyword id="KW-0819">tRNA processing</keyword>
<name>RNC_SINFN</name>
<comment type="function">
    <text evidence="1">Digests double-stranded RNA. Involved in the processing of primary rRNA transcript to yield the immediate precursors to the large and small rRNAs (23S and 16S). Processes some mRNAs, and tRNAs when they are encoded in the rRNA operon. Processes pre-crRNA and tracrRNA of type II CRISPR loci if present in the organism.</text>
</comment>
<comment type="catalytic activity">
    <reaction evidence="1">
        <text>Endonucleolytic cleavage to 5'-phosphomonoester.</text>
        <dbReference type="EC" id="3.1.26.3"/>
    </reaction>
</comment>
<comment type="cofactor">
    <cofactor evidence="1">
        <name>Mg(2+)</name>
        <dbReference type="ChEBI" id="CHEBI:18420"/>
    </cofactor>
</comment>
<comment type="subunit">
    <text evidence="1">Homodimer.</text>
</comment>
<comment type="subcellular location">
    <subcellularLocation>
        <location evidence="1">Cytoplasm</location>
    </subcellularLocation>
</comment>
<comment type="similarity">
    <text evidence="1">Belongs to the ribonuclease III family.</text>
</comment>
<sequence length="239" mass="26690">MMKGRSLSAEDRARLETAIGYQFAEKERLDRALTHSSARNARASNYQRLEFLGDRVLGLCVAELLFQTFLDANEGELSVRLNQLVSAESCARVADELSLHEYIRTGSDVKKITGKHMMNVRADVVESLIAAIYLDGGLEAARRFVLRHWTDRAASADGARRDAKTELQEWAHAKFGAAPRYRTDDRSGPDHDPRFTVTVEVDGIAPETGTDRSKRGAEQIAAMRLLEREGVWQKRSAGN</sequence>
<accession>C3M8S4</accession>
<reference key="1">
    <citation type="journal article" date="2009" name="Appl. Environ. Microbiol.">
        <title>Rhizobium sp. strain NGR234 possesses a remarkable number of secretion systems.</title>
        <authorList>
            <person name="Schmeisser C."/>
            <person name="Liesegang H."/>
            <person name="Krysciak D."/>
            <person name="Bakkou N."/>
            <person name="Le Quere A."/>
            <person name="Wollherr A."/>
            <person name="Heinemeyer I."/>
            <person name="Morgenstern B."/>
            <person name="Pommerening-Roeser A."/>
            <person name="Flores M."/>
            <person name="Palacios R."/>
            <person name="Brenner S."/>
            <person name="Gottschalk G."/>
            <person name="Schmitz R.A."/>
            <person name="Broughton W.J."/>
            <person name="Perret X."/>
            <person name="Strittmatter A.W."/>
            <person name="Streit W.R."/>
        </authorList>
    </citation>
    <scope>NUCLEOTIDE SEQUENCE [LARGE SCALE GENOMIC DNA]</scope>
    <source>
        <strain>NBRC 101917 / NGR234</strain>
    </source>
</reference>
<dbReference type="EC" id="3.1.26.3" evidence="1"/>
<dbReference type="EMBL" id="CP001389">
    <property type="protein sequence ID" value="ACP24620.1"/>
    <property type="molecule type" value="Genomic_DNA"/>
</dbReference>
<dbReference type="RefSeq" id="YP_002825373.1">
    <property type="nucleotide sequence ID" value="NC_012587.1"/>
</dbReference>
<dbReference type="SMR" id="C3M8S4"/>
<dbReference type="STRING" id="394.NGR_c08290"/>
<dbReference type="KEGG" id="rhi:NGR_c08290"/>
<dbReference type="PATRIC" id="fig|394.7.peg.3641"/>
<dbReference type="eggNOG" id="COG0571">
    <property type="taxonomic scope" value="Bacteria"/>
</dbReference>
<dbReference type="HOGENOM" id="CLU_000907_1_1_5"/>
<dbReference type="OrthoDB" id="9805026at2"/>
<dbReference type="Proteomes" id="UP000001054">
    <property type="component" value="Chromosome"/>
</dbReference>
<dbReference type="GO" id="GO:0005737">
    <property type="term" value="C:cytoplasm"/>
    <property type="evidence" value="ECO:0007669"/>
    <property type="project" value="UniProtKB-SubCell"/>
</dbReference>
<dbReference type="GO" id="GO:0003725">
    <property type="term" value="F:double-stranded RNA binding"/>
    <property type="evidence" value="ECO:0007669"/>
    <property type="project" value="TreeGrafter"/>
</dbReference>
<dbReference type="GO" id="GO:0046872">
    <property type="term" value="F:metal ion binding"/>
    <property type="evidence" value="ECO:0007669"/>
    <property type="project" value="UniProtKB-KW"/>
</dbReference>
<dbReference type="GO" id="GO:0004525">
    <property type="term" value="F:ribonuclease III activity"/>
    <property type="evidence" value="ECO:0007669"/>
    <property type="project" value="UniProtKB-UniRule"/>
</dbReference>
<dbReference type="GO" id="GO:0019843">
    <property type="term" value="F:rRNA binding"/>
    <property type="evidence" value="ECO:0007669"/>
    <property type="project" value="UniProtKB-KW"/>
</dbReference>
<dbReference type="GO" id="GO:0006397">
    <property type="term" value="P:mRNA processing"/>
    <property type="evidence" value="ECO:0007669"/>
    <property type="project" value="UniProtKB-UniRule"/>
</dbReference>
<dbReference type="GO" id="GO:0010468">
    <property type="term" value="P:regulation of gene expression"/>
    <property type="evidence" value="ECO:0007669"/>
    <property type="project" value="TreeGrafter"/>
</dbReference>
<dbReference type="GO" id="GO:0006364">
    <property type="term" value="P:rRNA processing"/>
    <property type="evidence" value="ECO:0007669"/>
    <property type="project" value="UniProtKB-UniRule"/>
</dbReference>
<dbReference type="GO" id="GO:0008033">
    <property type="term" value="P:tRNA processing"/>
    <property type="evidence" value="ECO:0007669"/>
    <property type="project" value="UniProtKB-KW"/>
</dbReference>
<dbReference type="CDD" id="cd10845">
    <property type="entry name" value="DSRM_RNAse_III_family"/>
    <property type="match status" value="1"/>
</dbReference>
<dbReference type="CDD" id="cd00593">
    <property type="entry name" value="RIBOc"/>
    <property type="match status" value="1"/>
</dbReference>
<dbReference type="FunFam" id="1.10.1520.10:FF:000001">
    <property type="entry name" value="Ribonuclease 3"/>
    <property type="match status" value="1"/>
</dbReference>
<dbReference type="Gene3D" id="3.30.160.20">
    <property type="match status" value="1"/>
</dbReference>
<dbReference type="Gene3D" id="1.10.1520.10">
    <property type="entry name" value="Ribonuclease III domain"/>
    <property type="match status" value="1"/>
</dbReference>
<dbReference type="HAMAP" id="MF_00104">
    <property type="entry name" value="RNase_III"/>
    <property type="match status" value="1"/>
</dbReference>
<dbReference type="InterPro" id="IPR014720">
    <property type="entry name" value="dsRBD_dom"/>
</dbReference>
<dbReference type="InterPro" id="IPR011907">
    <property type="entry name" value="RNase_III"/>
</dbReference>
<dbReference type="InterPro" id="IPR000999">
    <property type="entry name" value="RNase_III_dom"/>
</dbReference>
<dbReference type="InterPro" id="IPR036389">
    <property type="entry name" value="RNase_III_sf"/>
</dbReference>
<dbReference type="NCBIfam" id="TIGR02191">
    <property type="entry name" value="RNaseIII"/>
    <property type="match status" value="1"/>
</dbReference>
<dbReference type="PANTHER" id="PTHR11207:SF0">
    <property type="entry name" value="RIBONUCLEASE 3"/>
    <property type="match status" value="1"/>
</dbReference>
<dbReference type="PANTHER" id="PTHR11207">
    <property type="entry name" value="RIBONUCLEASE III"/>
    <property type="match status" value="1"/>
</dbReference>
<dbReference type="Pfam" id="PF00035">
    <property type="entry name" value="dsrm"/>
    <property type="match status" value="1"/>
</dbReference>
<dbReference type="Pfam" id="PF14622">
    <property type="entry name" value="Ribonucleas_3_3"/>
    <property type="match status" value="1"/>
</dbReference>
<dbReference type="SMART" id="SM00358">
    <property type="entry name" value="DSRM"/>
    <property type="match status" value="1"/>
</dbReference>
<dbReference type="SMART" id="SM00535">
    <property type="entry name" value="RIBOc"/>
    <property type="match status" value="1"/>
</dbReference>
<dbReference type="SUPFAM" id="SSF54768">
    <property type="entry name" value="dsRNA-binding domain-like"/>
    <property type="match status" value="1"/>
</dbReference>
<dbReference type="SUPFAM" id="SSF69065">
    <property type="entry name" value="RNase III domain-like"/>
    <property type="match status" value="1"/>
</dbReference>
<dbReference type="PROSITE" id="PS50137">
    <property type="entry name" value="DS_RBD"/>
    <property type="match status" value="1"/>
</dbReference>
<dbReference type="PROSITE" id="PS00517">
    <property type="entry name" value="RNASE_3_1"/>
    <property type="match status" value="1"/>
</dbReference>
<dbReference type="PROSITE" id="PS50142">
    <property type="entry name" value="RNASE_3_2"/>
    <property type="match status" value="1"/>
</dbReference>
<protein>
    <recommendedName>
        <fullName evidence="1">Ribonuclease 3</fullName>
        <ecNumber evidence="1">3.1.26.3</ecNumber>
    </recommendedName>
    <alternativeName>
        <fullName evidence="1">Ribonuclease III</fullName>
        <shortName evidence="1">RNase III</shortName>
    </alternativeName>
</protein>